<keyword id="KW-0002">3D-structure</keyword>
<keyword id="KW-0044">Antibiotic</keyword>
<keyword id="KW-0929">Antimicrobial</keyword>
<keyword id="KW-0165">Cleavage on pair of basic residues</keyword>
<keyword id="KW-0211">Defensin</keyword>
<keyword id="KW-1015">Disulfide bond</keyword>
<keyword id="KW-0964">Secreted</keyword>
<keyword id="KW-0732">Signal</keyword>
<dbReference type="EMBL" id="JN014007">
    <property type="protein sequence ID" value="AEM44801.1"/>
    <property type="molecule type" value="mRNA"/>
</dbReference>
<dbReference type="PDB" id="2LR5">
    <property type="method" value="NMR"/>
    <property type="chains" value="A=44-81"/>
</dbReference>
<dbReference type="PDBsum" id="2LR5"/>
<dbReference type="SMR" id="I1T3C7"/>
<dbReference type="TCDB" id="1.C.47.1.10">
    <property type="family name" value="the insect/fungal defensin (insect/fungal defensin) family"/>
</dbReference>
<dbReference type="GO" id="GO:0005576">
    <property type="term" value="C:extracellular region"/>
    <property type="evidence" value="ECO:0007669"/>
    <property type="project" value="UniProtKB-SubCell"/>
</dbReference>
<dbReference type="GO" id="GO:0042742">
    <property type="term" value="P:defense response to bacterium"/>
    <property type="evidence" value="ECO:0007669"/>
    <property type="project" value="UniProtKB-KW"/>
</dbReference>
<dbReference type="Gene3D" id="3.30.30.10">
    <property type="entry name" value="Knottin, scorpion toxin-like"/>
    <property type="match status" value="1"/>
</dbReference>
<dbReference type="InterPro" id="IPR001542">
    <property type="entry name" value="Defensin_invertebrate/fungal"/>
</dbReference>
<dbReference type="InterPro" id="IPR036574">
    <property type="entry name" value="Scorpion_toxin-like_sf"/>
</dbReference>
<dbReference type="Pfam" id="PF01097">
    <property type="entry name" value="Defensin_2"/>
    <property type="match status" value="1"/>
</dbReference>
<dbReference type="SUPFAM" id="SSF57095">
    <property type="entry name" value="Scorpion toxin-like"/>
    <property type="match status" value="1"/>
</dbReference>
<dbReference type="PROSITE" id="PS51378">
    <property type="entry name" value="INVERT_DEFENSINS"/>
    <property type="match status" value="1"/>
</dbReference>
<proteinExistence type="evidence at protein level"/>
<sequence>MQFTKLATILLVSLMGSAAIAAPATNNAAVDAAADATPAVEKRGFGCPFNENECHAHCLSIGRKFGFCAGPLRATCTCGKQ</sequence>
<evidence type="ECO:0000250" key="1">
    <source>
        <dbReference type="UniProtKB" id="Q53I06"/>
    </source>
</evidence>
<evidence type="ECO:0000255" key="2"/>
<evidence type="ECO:0000269" key="3">
    <source>
    </source>
</evidence>
<evidence type="ECO:0000269" key="4">
    <source>
    </source>
</evidence>
<evidence type="ECO:0000303" key="5">
    <source>
    </source>
</evidence>
<evidence type="ECO:0000305" key="6"/>
<evidence type="ECO:0000305" key="7">
    <source>
    </source>
</evidence>
<evidence type="ECO:0007744" key="8">
    <source>
        <dbReference type="PDB" id="2LR5"/>
    </source>
</evidence>
<protein>
    <recommendedName>
        <fullName evidence="5">Fungal defensin micasin</fullName>
    </recommendedName>
    <alternativeName>
        <fullName evidence="5">Fungal defensin-like peptide</fullName>
        <shortName evidence="5">DLP</shortName>
        <shortName evidence="5">fDLP</shortName>
    </alternativeName>
</protein>
<name>DEFM0_ARTOT</name>
<comment type="function">
    <text evidence="3 4">Antibacterial peptide with potent activity against both Gram-positive and Gram-negative bacteria (PubMed:22586077). May kill bacteria via an intracellular action mode to affect protein folding (PubMed:22586077). Does not show effects on tested filamentous fungi or on the yeast S.cerevisiae (PubMed:22586077). Does not act by destroying the membrane integrity, which is consistent with its nonamphiphilic architecture (PubMed:22586077). Acts more rapidly than vancomycin, suggesting it does not act by inhibiting cell-wall biosynthesis (PubMed:22586077). Does not cause hemolysis and has no cytotoxic effect on HEK cells (PubMed:22586077, PubMed:27084888). In vivo, is as efficient as vancomycin to protect mouse peritonitis models from S.aureus and P.aeruginosa infections (PubMed:22586077).</text>
</comment>
<comment type="subcellular location">
    <subcellularLocation>
        <location evidence="7">Secreted</location>
    </subcellularLocation>
</comment>
<comment type="domain">
    <text evidence="7">Has the structural arrangement of an alpha-helix connected to a beta-sheet by disulfide bonds (CSalpha/beta).</text>
</comment>
<comment type="miscellaneous">
    <text evidence="7">The Cys-47-Pro-48 bond adopts an unusual cis conformation.</text>
</comment>
<comment type="similarity">
    <text evidence="6">Belongs to the invertebrate defensin family.</text>
</comment>
<comment type="caution">
    <text evidence="7">Micasin should not be confused with micasin-1, the second defensin-like peptide from A.canis, which shows low sequence similarity compared to micasin.</text>
</comment>
<feature type="signal peptide" evidence="2">
    <location>
        <begin position="1"/>
        <end position="21"/>
    </location>
</feature>
<feature type="propeptide" id="PRO_0000449426" evidence="7">
    <location>
        <begin position="22"/>
        <end position="43"/>
    </location>
</feature>
<feature type="chain" id="PRO_5003653316" description="Fungal defensin micasin" evidence="7">
    <location>
        <begin position="44"/>
        <end position="81"/>
    </location>
</feature>
<feature type="disulfide bond" evidence="3 8">
    <location>
        <begin position="47"/>
        <end position="68"/>
    </location>
</feature>
<feature type="disulfide bond" evidence="3 8">
    <location>
        <begin position="54"/>
        <end position="76"/>
    </location>
</feature>
<feature type="disulfide bond" evidence="3 8">
    <location>
        <begin position="58"/>
        <end position="78"/>
    </location>
</feature>
<feature type="mutagenesis site" description="Complete loss of antibacterial activity." evidence="4">
    <original>F</original>
    <variation>A</variation>
    <location>
        <position position="49"/>
    </location>
</feature>
<feature type="mutagenesis site" description="Important increase of antibacterial activity. This mutant may act by selectively inhibiting peptidoglycan biosynthesis through complex formation with the cell wall precursor lipid II (1:1 molar ratio) thus inhibiting cell wall synthesis. No change in hemolysis induction and cytotoxicity." evidence="1 4">
    <original>E</original>
    <variation>A</variation>
    <variation>K</variation>
    <variation>R</variation>
    <variation>Q</variation>
    <location>
        <position position="51"/>
    </location>
</feature>
<feature type="mutagenesis site" description="3-fold decrease in antibacterial activity." evidence="4">
    <original>E</original>
    <variation>D</variation>
    <location>
        <position position="51"/>
    </location>
</feature>
<feature type="mutagenesis site" description="Small increase of antibacterial activity." evidence="4">
    <original>E</original>
    <variation>L</variation>
    <location>
        <position position="51"/>
    </location>
</feature>
<feature type="mutagenesis site" description="Complete loss of antibacterial activity." evidence="4">
    <original>H</original>
    <variation>A</variation>
    <location>
        <position position="57"/>
    </location>
</feature>
<feature type="mutagenesis site" description="Important decrease in antibacterial activity." evidence="4">
    <original>R</original>
    <variation>A</variation>
    <location>
        <position position="63"/>
    </location>
</feature>
<feature type="mutagenesis site" description="Important decrease in antibacterial activity." evidence="4">
    <original>K</original>
    <variation>A</variation>
    <location>
        <position position="64"/>
    </location>
</feature>
<feature type="mutagenesis site" description="Complete loss of antibacterial activity." evidence="4">
    <original>F</original>
    <variation>A</variation>
    <location>
        <position position="65"/>
    </location>
</feature>
<feature type="mutagenesis site" description="Complete loss of antibacterial activity." evidence="4">
    <original>L</original>
    <variation>A</variation>
    <location>
        <position position="72"/>
    </location>
</feature>
<feature type="mutagenesis site" description="Complete loss of antibacterial activity." evidence="4">
    <original>R</original>
    <variation>A</variation>
    <location>
        <position position="73"/>
    </location>
</feature>
<feature type="mutagenesis site" description="3-fold decrease in antibacterial activity." evidence="4">
    <original>K</original>
    <variation>A</variation>
    <location>
        <position position="80"/>
    </location>
</feature>
<accession>I1T3C7</accession>
<reference key="1">
    <citation type="journal article" date="2012" name="Proc. Natl. Acad. Sci. U.S.A.">
        <title>Dermatophytic defensin with antiinfective potential.</title>
        <authorList>
            <person name="Zhu S."/>
            <person name="Gao B."/>
            <person name="Harvey P.J."/>
            <person name="Craik D.J."/>
        </authorList>
    </citation>
    <scope>NUCLEOTIDE SEQUENCE [MRNA]</scope>
    <scope>SYNTHESIS OF 44-81</scope>
    <scope>FUNCTION</scope>
    <scope>STRUCTURE BY NMR OF 44-81</scope>
    <scope>DISULFIDE BONDS</scope>
</reference>
<reference key="2">
    <citation type="journal article" date="2016" name="FASEB J.">
        <title>Single-point mutation-mediated local amphipathic adjustment dramatically enhances antibacterial activity of a fungal defensin.</title>
        <authorList>
            <person name="Wu J."/>
            <person name="Gao B."/>
            <person name="Zhu S."/>
        </authorList>
    </citation>
    <scope>FUNCTION</scope>
    <scope>MUTAGENESIS OF PHE-49; GLU-51; HIS-57; ARG-63; LYS-64; PHE-65; LEU-72; ARG-73 AND LYS-80</scope>
    <scope>3D-STRUCTURE MODELING OF WILD-TYPE PEPTIDE AND MUTANTS</scope>
</reference>
<organism>
    <name type="scientific">Arthroderma otae</name>
    <name type="common">Microsporum canis</name>
    <dbReference type="NCBI Taxonomy" id="63405"/>
    <lineage>
        <taxon>Eukaryota</taxon>
        <taxon>Fungi</taxon>
        <taxon>Dikarya</taxon>
        <taxon>Ascomycota</taxon>
        <taxon>Pezizomycotina</taxon>
        <taxon>Eurotiomycetes</taxon>
        <taxon>Eurotiomycetidae</taxon>
        <taxon>Onygenales</taxon>
        <taxon>Arthrodermataceae</taxon>
        <taxon>Microsporum</taxon>
    </lineage>
</organism>